<name>PYRC_ALKEH</name>
<comment type="function">
    <text evidence="1">Catalyzes the reversible cyclization of carbamoyl aspartate to dihydroorotate.</text>
</comment>
<comment type="catalytic activity">
    <reaction evidence="1">
        <text>(S)-dihydroorotate + H2O = N-carbamoyl-L-aspartate + H(+)</text>
        <dbReference type="Rhea" id="RHEA:24296"/>
        <dbReference type="ChEBI" id="CHEBI:15377"/>
        <dbReference type="ChEBI" id="CHEBI:15378"/>
        <dbReference type="ChEBI" id="CHEBI:30864"/>
        <dbReference type="ChEBI" id="CHEBI:32814"/>
        <dbReference type="EC" id="3.5.2.3"/>
    </reaction>
</comment>
<comment type="cofactor">
    <cofactor evidence="1">
        <name>Zn(2+)</name>
        <dbReference type="ChEBI" id="CHEBI:29105"/>
    </cofactor>
    <text evidence="1">Binds 2 Zn(2+) ions per subunit.</text>
</comment>
<comment type="pathway">
    <text evidence="1">Pyrimidine metabolism; UMP biosynthesis via de novo pathway; (S)-dihydroorotate from bicarbonate: step 3/3.</text>
</comment>
<comment type="subunit">
    <text evidence="1">Homodimer.</text>
</comment>
<comment type="similarity">
    <text evidence="1">Belongs to the metallo-dependent hydrolases superfamily. DHOase family. Class II DHOase subfamily.</text>
</comment>
<dbReference type="EC" id="3.5.2.3" evidence="1"/>
<dbReference type="EMBL" id="CP000453">
    <property type="protein sequence ID" value="ABI55951.1"/>
    <property type="molecule type" value="Genomic_DNA"/>
</dbReference>
<dbReference type="RefSeq" id="WP_011628346.1">
    <property type="nucleotide sequence ID" value="NC_008340.1"/>
</dbReference>
<dbReference type="SMR" id="Q0AB36"/>
<dbReference type="MEROPS" id="M38.A02"/>
<dbReference type="KEGG" id="aeh:Mlg_0597"/>
<dbReference type="eggNOG" id="COG0418">
    <property type="taxonomic scope" value="Bacteria"/>
</dbReference>
<dbReference type="HOGENOM" id="CLU_041558_1_0_6"/>
<dbReference type="OrthoDB" id="9808095at2"/>
<dbReference type="UniPathway" id="UPA00070">
    <property type="reaction ID" value="UER00117"/>
</dbReference>
<dbReference type="Proteomes" id="UP000001962">
    <property type="component" value="Chromosome"/>
</dbReference>
<dbReference type="GO" id="GO:0005829">
    <property type="term" value="C:cytosol"/>
    <property type="evidence" value="ECO:0007669"/>
    <property type="project" value="TreeGrafter"/>
</dbReference>
<dbReference type="GO" id="GO:0004151">
    <property type="term" value="F:dihydroorotase activity"/>
    <property type="evidence" value="ECO:0007669"/>
    <property type="project" value="UniProtKB-UniRule"/>
</dbReference>
<dbReference type="GO" id="GO:0008270">
    <property type="term" value="F:zinc ion binding"/>
    <property type="evidence" value="ECO:0007669"/>
    <property type="project" value="UniProtKB-UniRule"/>
</dbReference>
<dbReference type="GO" id="GO:0006207">
    <property type="term" value="P:'de novo' pyrimidine nucleobase biosynthetic process"/>
    <property type="evidence" value="ECO:0007669"/>
    <property type="project" value="TreeGrafter"/>
</dbReference>
<dbReference type="GO" id="GO:0044205">
    <property type="term" value="P:'de novo' UMP biosynthetic process"/>
    <property type="evidence" value="ECO:0007669"/>
    <property type="project" value="UniProtKB-UniRule"/>
</dbReference>
<dbReference type="CDD" id="cd01294">
    <property type="entry name" value="DHOase"/>
    <property type="match status" value="1"/>
</dbReference>
<dbReference type="FunFam" id="3.20.20.140:FF:000006">
    <property type="entry name" value="Dihydroorotase"/>
    <property type="match status" value="1"/>
</dbReference>
<dbReference type="Gene3D" id="3.20.20.140">
    <property type="entry name" value="Metal-dependent hydrolases"/>
    <property type="match status" value="1"/>
</dbReference>
<dbReference type="HAMAP" id="MF_00219">
    <property type="entry name" value="PyrC_classII"/>
    <property type="match status" value="1"/>
</dbReference>
<dbReference type="InterPro" id="IPR006680">
    <property type="entry name" value="Amidohydro-rel"/>
</dbReference>
<dbReference type="InterPro" id="IPR004721">
    <property type="entry name" value="DHOdimr"/>
</dbReference>
<dbReference type="InterPro" id="IPR002195">
    <property type="entry name" value="Dihydroorotase_CS"/>
</dbReference>
<dbReference type="InterPro" id="IPR032466">
    <property type="entry name" value="Metal_Hydrolase"/>
</dbReference>
<dbReference type="NCBIfam" id="TIGR00856">
    <property type="entry name" value="pyrC_dimer"/>
    <property type="match status" value="1"/>
</dbReference>
<dbReference type="PANTHER" id="PTHR43137">
    <property type="entry name" value="DIHYDROOROTASE"/>
    <property type="match status" value="1"/>
</dbReference>
<dbReference type="PANTHER" id="PTHR43137:SF1">
    <property type="entry name" value="DIHYDROOROTASE"/>
    <property type="match status" value="1"/>
</dbReference>
<dbReference type="Pfam" id="PF01979">
    <property type="entry name" value="Amidohydro_1"/>
    <property type="match status" value="1"/>
</dbReference>
<dbReference type="PIRSF" id="PIRSF001237">
    <property type="entry name" value="DHOdimr"/>
    <property type="match status" value="1"/>
</dbReference>
<dbReference type="SUPFAM" id="SSF51556">
    <property type="entry name" value="Metallo-dependent hydrolases"/>
    <property type="match status" value="1"/>
</dbReference>
<dbReference type="PROSITE" id="PS00482">
    <property type="entry name" value="DIHYDROOROTASE_1"/>
    <property type="match status" value="1"/>
</dbReference>
<dbReference type="PROSITE" id="PS00483">
    <property type="entry name" value="DIHYDROOROTASE_2"/>
    <property type="match status" value="1"/>
</dbReference>
<feature type="chain" id="PRO_0000325568" description="Dihydroorotase">
    <location>
        <begin position="1"/>
        <end position="343"/>
    </location>
</feature>
<feature type="active site" evidence="1">
    <location>
        <position position="247"/>
    </location>
</feature>
<feature type="binding site" evidence="1">
    <location>
        <position position="13"/>
    </location>
    <ligand>
        <name>Zn(2+)</name>
        <dbReference type="ChEBI" id="CHEBI:29105"/>
        <label>1</label>
    </ligand>
</feature>
<feature type="binding site" evidence="1">
    <location>
        <begin position="15"/>
        <end position="17"/>
    </location>
    <ligand>
        <name>substrate</name>
    </ligand>
</feature>
<feature type="binding site" evidence="1">
    <location>
        <position position="15"/>
    </location>
    <ligand>
        <name>Zn(2+)</name>
        <dbReference type="ChEBI" id="CHEBI:29105"/>
        <label>1</label>
    </ligand>
</feature>
<feature type="binding site" evidence="1">
    <location>
        <position position="41"/>
    </location>
    <ligand>
        <name>substrate</name>
    </ligand>
</feature>
<feature type="binding site" description="via carbamate group" evidence="1">
    <location>
        <position position="99"/>
    </location>
    <ligand>
        <name>Zn(2+)</name>
        <dbReference type="ChEBI" id="CHEBI:29105"/>
        <label>1</label>
    </ligand>
</feature>
<feature type="binding site" description="via carbamate group" evidence="1">
    <location>
        <position position="99"/>
    </location>
    <ligand>
        <name>Zn(2+)</name>
        <dbReference type="ChEBI" id="CHEBI:29105"/>
        <label>2</label>
    </ligand>
</feature>
<feature type="binding site" evidence="1">
    <location>
        <position position="136"/>
    </location>
    <ligand>
        <name>substrate</name>
    </ligand>
</feature>
<feature type="binding site" evidence="1">
    <location>
        <position position="136"/>
    </location>
    <ligand>
        <name>Zn(2+)</name>
        <dbReference type="ChEBI" id="CHEBI:29105"/>
        <label>2</label>
    </ligand>
</feature>
<feature type="binding site" evidence="1">
    <location>
        <position position="174"/>
    </location>
    <ligand>
        <name>Zn(2+)</name>
        <dbReference type="ChEBI" id="CHEBI:29105"/>
        <label>2</label>
    </ligand>
</feature>
<feature type="binding site" evidence="1">
    <location>
        <position position="219"/>
    </location>
    <ligand>
        <name>substrate</name>
    </ligand>
</feature>
<feature type="binding site" evidence="1">
    <location>
        <position position="247"/>
    </location>
    <ligand>
        <name>Zn(2+)</name>
        <dbReference type="ChEBI" id="CHEBI:29105"/>
        <label>1</label>
    </ligand>
</feature>
<feature type="binding site" evidence="1">
    <location>
        <position position="251"/>
    </location>
    <ligand>
        <name>substrate</name>
    </ligand>
</feature>
<feature type="binding site" evidence="1">
    <location>
        <position position="263"/>
    </location>
    <ligand>
        <name>substrate</name>
    </ligand>
</feature>
<feature type="modified residue" description="N6-carboxylysine" evidence="1">
    <location>
        <position position="99"/>
    </location>
</feature>
<keyword id="KW-0378">Hydrolase</keyword>
<keyword id="KW-0479">Metal-binding</keyword>
<keyword id="KW-0665">Pyrimidine biosynthesis</keyword>
<keyword id="KW-1185">Reference proteome</keyword>
<keyword id="KW-0862">Zinc</keyword>
<proteinExistence type="inferred from homology"/>
<sequence length="343" mass="37531">MQRITLTRPDDWHLHLRDGEQLATVLPHTATVFGRAIIMPNLKPPVTTVDQAAAYRERILAALPAGAHFEPLMTLYLTDNTPPAEIEKAAASGFVHAVKLYPAGATTNSDAGVTDLARCEETLAAMAERGLPLCVHGEVTRDEVDIFDREAHFIDEVLDPLVQRHSRLRVVFEHITTQAAVDYLRQAPDRVGATLTVQHLMANRNHMLVGGVRPHYYCLPILKRERDRQALVEAATSGHPRFFLGTDSAPHPKGAKESACGCAGVYSAHAALPFYAEIFEAAGALDRLEGFASHHGADFYGLPRNRDSVTLERAATPIPEAFPMGDDTLVPFRAGGEVAWRVV</sequence>
<organism>
    <name type="scientific">Alkalilimnicola ehrlichii (strain ATCC BAA-1101 / DSM 17681 / MLHE-1)</name>
    <dbReference type="NCBI Taxonomy" id="187272"/>
    <lineage>
        <taxon>Bacteria</taxon>
        <taxon>Pseudomonadati</taxon>
        <taxon>Pseudomonadota</taxon>
        <taxon>Gammaproteobacteria</taxon>
        <taxon>Chromatiales</taxon>
        <taxon>Ectothiorhodospiraceae</taxon>
        <taxon>Alkalilimnicola</taxon>
    </lineage>
</organism>
<protein>
    <recommendedName>
        <fullName evidence="1">Dihydroorotase</fullName>
        <shortName evidence="1">DHOase</shortName>
        <ecNumber evidence="1">3.5.2.3</ecNumber>
    </recommendedName>
</protein>
<gene>
    <name evidence="1" type="primary">pyrC</name>
    <name type="ordered locus">Mlg_0597</name>
</gene>
<evidence type="ECO:0000255" key="1">
    <source>
        <dbReference type="HAMAP-Rule" id="MF_00219"/>
    </source>
</evidence>
<reference key="1">
    <citation type="submission" date="2006-08" db="EMBL/GenBank/DDBJ databases">
        <title>Complete sequence of Alkalilimnicola ehrilichei MLHE-1.</title>
        <authorList>
            <person name="Copeland A."/>
            <person name="Lucas S."/>
            <person name="Lapidus A."/>
            <person name="Barry K."/>
            <person name="Detter J.C."/>
            <person name="Glavina del Rio T."/>
            <person name="Hammon N."/>
            <person name="Israni S."/>
            <person name="Dalin E."/>
            <person name="Tice H."/>
            <person name="Pitluck S."/>
            <person name="Sims D."/>
            <person name="Brettin T."/>
            <person name="Bruce D."/>
            <person name="Han C."/>
            <person name="Tapia R."/>
            <person name="Gilna P."/>
            <person name="Schmutz J."/>
            <person name="Larimer F."/>
            <person name="Land M."/>
            <person name="Hauser L."/>
            <person name="Kyrpides N."/>
            <person name="Mikhailova N."/>
            <person name="Oremland R.S."/>
            <person name="Hoeft S.E."/>
            <person name="Switzer-Blum J."/>
            <person name="Kulp T."/>
            <person name="King G."/>
            <person name="Tabita R."/>
            <person name="Witte B."/>
            <person name="Santini J.M."/>
            <person name="Basu P."/>
            <person name="Hollibaugh J.T."/>
            <person name="Xie G."/>
            <person name="Stolz J.F."/>
            <person name="Richardson P."/>
        </authorList>
    </citation>
    <scope>NUCLEOTIDE SEQUENCE [LARGE SCALE GENOMIC DNA]</scope>
    <source>
        <strain>ATCC BAA-1101 / DSM 17681 / MLHE-1</strain>
    </source>
</reference>
<accession>Q0AB36</accession>